<sequence>MAAPVMDTCHVSCCANRAPNVVSWGRGGLIAFGTCNSVAIYNPEEIRVVDLLNKHTGRVNAVQWVHEPDCSPENQLISGGSDNNVIVWEKLDGKFRACAVCSGHSGPVCAVDAVSLSSSHLLVASASSDSTVKLWTYSSDAAECLQTVAFGSGFMMDVSLALLPGSRVPVLACGGDDSRVHLYVQLSGQFQRVLTLTGHEDWVRGVEWANKDGELWLASCSQDCLIRVWRLFAKTAAEPDLQTDGIIKMKENIFQVSGEEFAVTLETVLAGHENWVYGIHWQPPSVKGDSVEQSLKLLSASMDKTMILWGPEEDSGMWVEMVRVGEVGGNTLGFYGCQMSPDGSMILAHAFHGALHLWHHDSNQEWRPSVVISGHFNAVQDMSWDPEGEFIITVGSDQTTRLFTPWTRKGSSQITWHEISRPQIHGYDMQCLTMVGRFQFVSGADEKVLRVFKAPRNFVENFAHISGTSLEKLLGCNDIADLPEGASTPALGLSNKAVFQGDLASPSPQQDGGDFNSLSDQYKESYFQPLKLAEPPTEDDLLQNTLWPEVQKLYGHGFEMFCLASDCARTVVASACKASKAEHASILLWSTASWKQLQSLSCHSLTITQMAFSPNGQLLLAVSRDRTWSLWRRGNPDLDTEAMFSLYANTSKDTSVHTRIIWSCDWSADNKYFVTSSRDKKVIIWGHAVSGVAVGEGEDARVTSCSSVLDVGDSATAVSICPFLCSDHSYLLAVGLENGQILLYKWKPLEDLSSESDWSRCKDTDACQGHTMVVKRLRWRPRLGRGGHGGQDSKEEQAWVQLASAGADHVVKIFDINLSAL</sequence>
<organism>
    <name type="scientific">Danio rerio</name>
    <name type="common">Zebrafish</name>
    <name type="synonym">Brachydanio rerio</name>
    <dbReference type="NCBI Taxonomy" id="7955"/>
    <lineage>
        <taxon>Eukaryota</taxon>
        <taxon>Metazoa</taxon>
        <taxon>Chordata</taxon>
        <taxon>Craniata</taxon>
        <taxon>Vertebrata</taxon>
        <taxon>Euteleostomi</taxon>
        <taxon>Actinopterygii</taxon>
        <taxon>Neopterygii</taxon>
        <taxon>Teleostei</taxon>
        <taxon>Ostariophysi</taxon>
        <taxon>Cypriniformes</taxon>
        <taxon>Danionidae</taxon>
        <taxon>Danioninae</taxon>
        <taxon>Danio</taxon>
    </lineage>
</organism>
<dbReference type="EMBL" id="BX927389">
    <property type="protein sequence ID" value="CAK05339.1"/>
    <property type="status" value="ALT_SEQ"/>
    <property type="molecule type" value="Genomic_DNA"/>
</dbReference>
<dbReference type="EMBL" id="BC124388">
    <property type="protein sequence ID" value="AAI24389.1"/>
    <property type="molecule type" value="mRNA"/>
</dbReference>
<dbReference type="SMR" id="Q05AM5"/>
<dbReference type="FunCoup" id="Q05AM5">
    <property type="interactions" value="2380"/>
</dbReference>
<dbReference type="STRING" id="7955.ENSDARP00000104754"/>
<dbReference type="PaxDb" id="7955-ENSDARP00000104754"/>
<dbReference type="PeptideAtlas" id="Q05AM5"/>
<dbReference type="AGR" id="ZFIN:ZDB-GENE-060503-525"/>
<dbReference type="ZFIN" id="ZDB-GENE-060503-525">
    <property type="gene designation" value="elp2"/>
</dbReference>
<dbReference type="eggNOG" id="KOG1063">
    <property type="taxonomic scope" value="Eukaryota"/>
</dbReference>
<dbReference type="InParanoid" id="Q05AM5"/>
<dbReference type="PhylomeDB" id="Q05AM5"/>
<dbReference type="TreeFam" id="TF105985"/>
<dbReference type="UniPathway" id="UPA00988"/>
<dbReference type="PRO" id="PR:Q05AM5"/>
<dbReference type="Proteomes" id="UP000000437">
    <property type="component" value="Unplaced"/>
</dbReference>
<dbReference type="GO" id="GO:0005737">
    <property type="term" value="C:cytoplasm"/>
    <property type="evidence" value="ECO:0007669"/>
    <property type="project" value="UniProtKB-SubCell"/>
</dbReference>
<dbReference type="GO" id="GO:0033588">
    <property type="term" value="C:elongator holoenzyme complex"/>
    <property type="evidence" value="ECO:0000318"/>
    <property type="project" value="GO_Central"/>
</dbReference>
<dbReference type="GO" id="GO:0005634">
    <property type="term" value="C:nucleus"/>
    <property type="evidence" value="ECO:0007669"/>
    <property type="project" value="UniProtKB-SubCell"/>
</dbReference>
<dbReference type="GO" id="GO:0002098">
    <property type="term" value="P:tRNA wobble uridine modification"/>
    <property type="evidence" value="ECO:0007669"/>
    <property type="project" value="InterPro"/>
</dbReference>
<dbReference type="CDD" id="cd00200">
    <property type="entry name" value="WD40"/>
    <property type="match status" value="1"/>
</dbReference>
<dbReference type="FunFam" id="2.130.10.10:FF:000575">
    <property type="entry name" value="Elongator acetyltransferase complex subunit 2"/>
    <property type="match status" value="1"/>
</dbReference>
<dbReference type="FunFam" id="2.130.10.10:FF:000679">
    <property type="entry name" value="Elongator acetyltransferase complex subunit 2"/>
    <property type="match status" value="1"/>
</dbReference>
<dbReference type="FunFam" id="2.130.10.10:FF:000771">
    <property type="entry name" value="Elongator acetyltransferase complex subunit 2"/>
    <property type="match status" value="1"/>
</dbReference>
<dbReference type="FunFam" id="2.130.10.10:FF:001544">
    <property type="entry name" value="Elongator complex protein 2"/>
    <property type="match status" value="1"/>
</dbReference>
<dbReference type="FunFam" id="2.130.10.10:FF:001556">
    <property type="entry name" value="Elongator complex protein 2"/>
    <property type="match status" value="1"/>
</dbReference>
<dbReference type="FunFam" id="2.130.10.10:FF:002171">
    <property type="entry name" value="Elongator complex protein 2"/>
    <property type="match status" value="1"/>
</dbReference>
<dbReference type="Gene3D" id="2.130.10.10">
    <property type="entry name" value="YVTN repeat-like/Quinoprotein amine dehydrogenase"/>
    <property type="match status" value="6"/>
</dbReference>
<dbReference type="InterPro" id="IPR037289">
    <property type="entry name" value="Elp2"/>
</dbReference>
<dbReference type="InterPro" id="IPR011048">
    <property type="entry name" value="Haem_d1_sf"/>
</dbReference>
<dbReference type="InterPro" id="IPR015943">
    <property type="entry name" value="WD40/YVTN_repeat-like_dom_sf"/>
</dbReference>
<dbReference type="InterPro" id="IPR036322">
    <property type="entry name" value="WD40_repeat_dom_sf"/>
</dbReference>
<dbReference type="InterPro" id="IPR001680">
    <property type="entry name" value="WD40_rpt"/>
</dbReference>
<dbReference type="PANTHER" id="PTHR44111">
    <property type="entry name" value="ELONGATOR COMPLEX PROTEIN 2"/>
    <property type="match status" value="1"/>
</dbReference>
<dbReference type="PANTHER" id="PTHR44111:SF1">
    <property type="entry name" value="ELONGATOR COMPLEX PROTEIN 2"/>
    <property type="match status" value="1"/>
</dbReference>
<dbReference type="Pfam" id="PF00400">
    <property type="entry name" value="WD40"/>
    <property type="match status" value="7"/>
</dbReference>
<dbReference type="SMART" id="SM00320">
    <property type="entry name" value="WD40"/>
    <property type="match status" value="11"/>
</dbReference>
<dbReference type="SUPFAM" id="SSF51004">
    <property type="entry name" value="C-terminal (heme d1) domain of cytochrome cd1-nitrite reductase"/>
    <property type="match status" value="1"/>
</dbReference>
<dbReference type="SUPFAM" id="SSF50978">
    <property type="entry name" value="WD40 repeat-like"/>
    <property type="match status" value="2"/>
</dbReference>
<dbReference type="PROSITE" id="PS50082">
    <property type="entry name" value="WD_REPEATS_2"/>
    <property type="match status" value="6"/>
</dbReference>
<dbReference type="PROSITE" id="PS50294">
    <property type="entry name" value="WD_REPEATS_REGION"/>
    <property type="match status" value="2"/>
</dbReference>
<evidence type="ECO:0000250" key="1">
    <source>
        <dbReference type="UniProtKB" id="P42935"/>
    </source>
</evidence>
<evidence type="ECO:0000250" key="2">
    <source>
        <dbReference type="UniProtKB" id="Q6IA86"/>
    </source>
</evidence>
<evidence type="ECO:0000305" key="3"/>
<accession>Q05AM5</accession>
<accession>Q1LUN8</accession>
<comment type="function">
    <text evidence="2">Component of the elongator complex which is required for multiple tRNA modifications, including mcm5U (5-methoxycarbonylmethyl uridine), mcm5s2U (5-methoxycarbonylmethyl-2-thiouridine), and ncm5U (5-carbamoylmethyl uridine). The elongator complex catalyzes the formation of carboxymethyluridine in the wobble base at position 34 in tRNAs.</text>
</comment>
<comment type="pathway">
    <text evidence="2">tRNA modification; 5-methoxycarbonylmethyl-2-thiouridine-tRNA biosynthesis.</text>
</comment>
<comment type="subunit">
    <text evidence="2">Component of the elongator complex.</text>
</comment>
<comment type="subcellular location">
    <subcellularLocation>
        <location evidence="2">Cytoplasm</location>
    </subcellularLocation>
    <subcellularLocation>
        <location evidence="2">Nucleus</location>
    </subcellularLocation>
</comment>
<comment type="domain">
    <text evidence="1">Folds into a two seven-bladed beta-propeller structure which is required for elongator complex assembly.</text>
</comment>
<comment type="similarity">
    <text evidence="3">Belongs to the WD repeat ELP2 family.</text>
</comment>
<comment type="caution">
    <text evidence="2">The elongator complex was originally thought to play a role in transcription elongation. However, it is no longer thought to play a direct role in this process and its primary function is thought to be in tRNA modification.</text>
</comment>
<comment type="sequence caution" evidence="3">
    <conflict type="erroneous gene model prediction">
        <sequence resource="EMBL-CDS" id="CAK05339"/>
    </conflict>
</comment>
<name>ELP2_DANRE</name>
<keyword id="KW-0963">Cytoplasm</keyword>
<keyword id="KW-0539">Nucleus</keyword>
<keyword id="KW-1185">Reference proteome</keyword>
<keyword id="KW-0677">Repeat</keyword>
<keyword id="KW-0819">tRNA processing</keyword>
<keyword id="KW-0853">WD repeat</keyword>
<feature type="chain" id="PRO_0000284000" description="Elongator complex protein 2">
    <location>
        <begin position="1"/>
        <end position="821"/>
    </location>
</feature>
<feature type="repeat" description="WD 1">
    <location>
        <begin position="14"/>
        <end position="53"/>
    </location>
</feature>
<feature type="repeat" description="WD 2">
    <location>
        <begin position="54"/>
        <end position="98"/>
    </location>
</feature>
<feature type="repeat" description="WD 3">
    <location>
        <begin position="103"/>
        <end position="145"/>
    </location>
</feature>
<feature type="repeat" description="WD 4">
    <location>
        <begin position="151"/>
        <end position="193"/>
    </location>
</feature>
<feature type="repeat" description="WD 5">
    <location>
        <begin position="198"/>
        <end position="239"/>
    </location>
</feature>
<feature type="repeat" description="WD 6">
    <location>
        <begin position="271"/>
        <end position="319"/>
    </location>
</feature>
<feature type="repeat" description="WD 7">
    <location>
        <begin position="329"/>
        <end position="368"/>
    </location>
</feature>
<feature type="repeat" description="WD 8">
    <location>
        <begin position="374"/>
        <end position="413"/>
    </location>
</feature>
<feature type="repeat" description="WD 9">
    <location>
        <begin position="424"/>
        <end position="462"/>
    </location>
</feature>
<feature type="repeat" description="WD 10">
    <location>
        <begin position="602"/>
        <end position="641"/>
    </location>
</feature>
<feature type="repeat" description="WD 11">
    <location>
        <begin position="656"/>
        <end position="695"/>
    </location>
</feature>
<feature type="repeat" description="WD 12">
    <location>
        <begin position="715"/>
        <end position="754"/>
    </location>
</feature>
<feature type="repeat" description="WD 13">
    <location>
        <begin position="769"/>
        <end position="821"/>
    </location>
</feature>
<feature type="sequence conflict" description="In Ref. 1; CAK05339." evidence="3" ref="1">
    <original>V</original>
    <variation>G</variation>
    <location>
        <position position="689"/>
    </location>
</feature>
<proteinExistence type="evidence at transcript level"/>
<protein>
    <recommendedName>
        <fullName>Elongator complex protein 2</fullName>
        <shortName>ELP2</shortName>
    </recommendedName>
</protein>
<gene>
    <name type="primary">elp2</name>
    <name type="ORF">si:dkey-190l1.1</name>
    <name type="ORF">zgc:153559</name>
</gene>
<reference key="1">
    <citation type="journal article" date="2013" name="Nature">
        <title>The zebrafish reference genome sequence and its relationship to the human genome.</title>
        <authorList>
            <person name="Howe K."/>
            <person name="Clark M.D."/>
            <person name="Torroja C.F."/>
            <person name="Torrance J."/>
            <person name="Berthelot C."/>
            <person name="Muffato M."/>
            <person name="Collins J.E."/>
            <person name="Humphray S."/>
            <person name="McLaren K."/>
            <person name="Matthews L."/>
            <person name="McLaren S."/>
            <person name="Sealy I."/>
            <person name="Caccamo M."/>
            <person name="Churcher C."/>
            <person name="Scott C."/>
            <person name="Barrett J.C."/>
            <person name="Koch R."/>
            <person name="Rauch G.J."/>
            <person name="White S."/>
            <person name="Chow W."/>
            <person name="Kilian B."/>
            <person name="Quintais L.T."/>
            <person name="Guerra-Assuncao J.A."/>
            <person name="Zhou Y."/>
            <person name="Gu Y."/>
            <person name="Yen J."/>
            <person name="Vogel J.H."/>
            <person name="Eyre T."/>
            <person name="Redmond S."/>
            <person name="Banerjee R."/>
            <person name="Chi J."/>
            <person name="Fu B."/>
            <person name="Langley E."/>
            <person name="Maguire S.F."/>
            <person name="Laird G.K."/>
            <person name="Lloyd D."/>
            <person name="Kenyon E."/>
            <person name="Donaldson S."/>
            <person name="Sehra H."/>
            <person name="Almeida-King J."/>
            <person name="Loveland J."/>
            <person name="Trevanion S."/>
            <person name="Jones M."/>
            <person name="Quail M."/>
            <person name="Willey D."/>
            <person name="Hunt A."/>
            <person name="Burton J."/>
            <person name="Sims S."/>
            <person name="McLay K."/>
            <person name="Plumb B."/>
            <person name="Davis J."/>
            <person name="Clee C."/>
            <person name="Oliver K."/>
            <person name="Clark R."/>
            <person name="Riddle C."/>
            <person name="Elliot D."/>
            <person name="Threadgold G."/>
            <person name="Harden G."/>
            <person name="Ware D."/>
            <person name="Begum S."/>
            <person name="Mortimore B."/>
            <person name="Kerry G."/>
            <person name="Heath P."/>
            <person name="Phillimore B."/>
            <person name="Tracey A."/>
            <person name="Corby N."/>
            <person name="Dunn M."/>
            <person name="Johnson C."/>
            <person name="Wood J."/>
            <person name="Clark S."/>
            <person name="Pelan S."/>
            <person name="Griffiths G."/>
            <person name="Smith M."/>
            <person name="Glithero R."/>
            <person name="Howden P."/>
            <person name="Barker N."/>
            <person name="Lloyd C."/>
            <person name="Stevens C."/>
            <person name="Harley J."/>
            <person name="Holt K."/>
            <person name="Panagiotidis G."/>
            <person name="Lovell J."/>
            <person name="Beasley H."/>
            <person name="Henderson C."/>
            <person name="Gordon D."/>
            <person name="Auger K."/>
            <person name="Wright D."/>
            <person name="Collins J."/>
            <person name="Raisen C."/>
            <person name="Dyer L."/>
            <person name="Leung K."/>
            <person name="Robertson L."/>
            <person name="Ambridge K."/>
            <person name="Leongamornlert D."/>
            <person name="McGuire S."/>
            <person name="Gilderthorp R."/>
            <person name="Griffiths C."/>
            <person name="Manthravadi D."/>
            <person name="Nichol S."/>
            <person name="Barker G."/>
            <person name="Whitehead S."/>
            <person name="Kay M."/>
            <person name="Brown J."/>
            <person name="Murnane C."/>
            <person name="Gray E."/>
            <person name="Humphries M."/>
            <person name="Sycamore N."/>
            <person name="Barker D."/>
            <person name="Saunders D."/>
            <person name="Wallis J."/>
            <person name="Babbage A."/>
            <person name="Hammond S."/>
            <person name="Mashreghi-Mohammadi M."/>
            <person name="Barr L."/>
            <person name="Martin S."/>
            <person name="Wray P."/>
            <person name="Ellington A."/>
            <person name="Matthews N."/>
            <person name="Ellwood M."/>
            <person name="Woodmansey R."/>
            <person name="Clark G."/>
            <person name="Cooper J."/>
            <person name="Tromans A."/>
            <person name="Grafham D."/>
            <person name="Skuce C."/>
            <person name="Pandian R."/>
            <person name="Andrews R."/>
            <person name="Harrison E."/>
            <person name="Kimberley A."/>
            <person name="Garnett J."/>
            <person name="Fosker N."/>
            <person name="Hall R."/>
            <person name="Garner P."/>
            <person name="Kelly D."/>
            <person name="Bird C."/>
            <person name="Palmer S."/>
            <person name="Gehring I."/>
            <person name="Berger A."/>
            <person name="Dooley C.M."/>
            <person name="Ersan-Urun Z."/>
            <person name="Eser C."/>
            <person name="Geiger H."/>
            <person name="Geisler M."/>
            <person name="Karotki L."/>
            <person name="Kirn A."/>
            <person name="Konantz J."/>
            <person name="Konantz M."/>
            <person name="Oberlander M."/>
            <person name="Rudolph-Geiger S."/>
            <person name="Teucke M."/>
            <person name="Lanz C."/>
            <person name="Raddatz G."/>
            <person name="Osoegawa K."/>
            <person name="Zhu B."/>
            <person name="Rapp A."/>
            <person name="Widaa S."/>
            <person name="Langford C."/>
            <person name="Yang F."/>
            <person name="Schuster S.C."/>
            <person name="Carter N.P."/>
            <person name="Harrow J."/>
            <person name="Ning Z."/>
            <person name="Herrero J."/>
            <person name="Searle S.M."/>
            <person name="Enright A."/>
            <person name="Geisler R."/>
            <person name="Plasterk R.H."/>
            <person name="Lee C."/>
            <person name="Westerfield M."/>
            <person name="de Jong P.J."/>
            <person name="Zon L.I."/>
            <person name="Postlethwait J.H."/>
            <person name="Nusslein-Volhard C."/>
            <person name="Hubbard T.J."/>
            <person name="Roest Crollius H."/>
            <person name="Rogers J."/>
            <person name="Stemple D.L."/>
        </authorList>
    </citation>
    <scope>NUCLEOTIDE SEQUENCE [LARGE SCALE GENOMIC DNA]</scope>
    <source>
        <strain>Tuebingen</strain>
    </source>
</reference>
<reference key="2">
    <citation type="submission" date="2006-09" db="EMBL/GenBank/DDBJ databases">
        <authorList>
            <consortium name="NIH - Zebrafish Gene Collection (ZGC) project"/>
        </authorList>
    </citation>
    <scope>NUCLEOTIDE SEQUENCE [LARGE SCALE MRNA]</scope>
    <source>
        <tissue>Embryo</tissue>
    </source>
</reference>